<feature type="chain" id="PRO_0000216890" description="Photosystem II reaction center protein Y">
    <location>
        <begin position="1"/>
        <end position="36"/>
    </location>
</feature>
<feature type="topological domain" description="Lumenal" evidence="1">
    <location>
        <begin position="1"/>
        <end position="4"/>
    </location>
</feature>
<feature type="transmembrane region" description="Helical" evidence="1">
    <location>
        <begin position="5"/>
        <end position="23"/>
    </location>
</feature>
<feature type="topological domain" description="Stromal" evidence="1">
    <location>
        <begin position="24"/>
        <end position="36"/>
    </location>
</feature>
<gene>
    <name evidence="1" type="primary">psbY</name>
    <name type="synonym">ycf32</name>
</gene>
<reference key="1">
    <citation type="journal article" date="1995" name="Plant Mol. Biol. Rep.">
        <title>Complete nucleotide sequence of the Porphyra purpurea chloroplast genome.</title>
        <authorList>
            <person name="Reith M.E."/>
            <person name="Munholland J."/>
        </authorList>
    </citation>
    <scope>NUCLEOTIDE SEQUENCE [LARGE SCALE GENOMIC DNA]</scope>
    <source>
        <strain>Avonport</strain>
    </source>
</reference>
<sequence>MDSRLLIVLIPVLAAASWAVYNIGRVALQQFRKMTS</sequence>
<dbReference type="EMBL" id="U38804">
    <property type="protein sequence ID" value="AAC08092.1"/>
    <property type="molecule type" value="Genomic_DNA"/>
</dbReference>
<dbReference type="PIR" id="S73127">
    <property type="entry name" value="S73127"/>
</dbReference>
<dbReference type="RefSeq" id="NP_053816.1">
    <property type="nucleotide sequence ID" value="NC_000925.1"/>
</dbReference>
<dbReference type="SMR" id="P51206"/>
<dbReference type="GeneID" id="809830"/>
<dbReference type="GO" id="GO:0009535">
    <property type="term" value="C:chloroplast thylakoid membrane"/>
    <property type="evidence" value="ECO:0007669"/>
    <property type="project" value="UniProtKB-SubCell"/>
</dbReference>
<dbReference type="GO" id="GO:0009523">
    <property type="term" value="C:photosystem II"/>
    <property type="evidence" value="ECO:0007669"/>
    <property type="project" value="UniProtKB-KW"/>
</dbReference>
<dbReference type="GO" id="GO:0030145">
    <property type="term" value="F:manganese ion binding"/>
    <property type="evidence" value="ECO:0007669"/>
    <property type="project" value="InterPro"/>
</dbReference>
<dbReference type="GO" id="GO:0015979">
    <property type="term" value="P:photosynthesis"/>
    <property type="evidence" value="ECO:0007669"/>
    <property type="project" value="UniProtKB-UniRule"/>
</dbReference>
<dbReference type="HAMAP" id="MF_00717">
    <property type="entry name" value="PSII_PsbY"/>
    <property type="match status" value="1"/>
</dbReference>
<dbReference type="InterPro" id="IPR009388">
    <property type="entry name" value="PSII_PsbY"/>
</dbReference>
<dbReference type="NCBIfam" id="NF009711">
    <property type="entry name" value="PRK13240.1"/>
    <property type="match status" value="1"/>
</dbReference>
<dbReference type="Pfam" id="PF06298">
    <property type="entry name" value="PsbY"/>
    <property type="match status" value="1"/>
</dbReference>
<evidence type="ECO:0000255" key="1">
    <source>
        <dbReference type="HAMAP-Rule" id="MF_00717"/>
    </source>
</evidence>
<protein>
    <recommendedName>
        <fullName evidence="1">Photosystem II reaction center protein Y</fullName>
    </recommendedName>
</protein>
<comment type="function">
    <text evidence="1">Loosely associated component of the core of photosystem II (PSII), it is not always seen in crystals. PSII is a light-driven water plastoquinone oxidoreductase, using light energy to abstract electrons from H(2)O, generating a proton gradient subsequently used for ATP formation.</text>
</comment>
<comment type="subunit">
    <text evidence="1">PSII is composed of 1 copy each of membrane proteins PsbA, PsbB, PsbC, PsbD, PsbE, PsbF, PsbH, PsbI, PsbJ, PsbK, PsbL, PsbM, PsbT, PsbX, PsbY, PsbZ, Psb30/Ycf12, at least 3 peripheral proteins of the oxygen-evolving complex and a large number of cofactors. It forms dimeric complexes.</text>
</comment>
<comment type="subcellular location">
    <subcellularLocation>
        <location evidence="1">Plastid</location>
        <location evidence="1">Chloroplast thylakoid membrane</location>
        <topology evidence="1">Single-pass membrane protein</topology>
    </subcellularLocation>
</comment>
<comment type="similarity">
    <text evidence="1">Belongs to the PsbY family.</text>
</comment>
<keyword id="KW-0150">Chloroplast</keyword>
<keyword id="KW-0472">Membrane</keyword>
<keyword id="KW-0602">Photosynthesis</keyword>
<keyword id="KW-0604">Photosystem II</keyword>
<keyword id="KW-0934">Plastid</keyword>
<keyword id="KW-0793">Thylakoid</keyword>
<keyword id="KW-0812">Transmembrane</keyword>
<keyword id="KW-1133">Transmembrane helix</keyword>
<proteinExistence type="inferred from homology"/>
<geneLocation type="chloroplast"/>
<organism>
    <name type="scientific">Porphyra purpurea</name>
    <name type="common">Red seaweed</name>
    <name type="synonym">Ulva purpurea</name>
    <dbReference type="NCBI Taxonomy" id="2787"/>
    <lineage>
        <taxon>Eukaryota</taxon>
        <taxon>Rhodophyta</taxon>
        <taxon>Bangiophyceae</taxon>
        <taxon>Bangiales</taxon>
        <taxon>Bangiaceae</taxon>
        <taxon>Porphyra</taxon>
    </lineage>
</organism>
<accession>P51206</accession>
<name>PSBY_PORPU</name>